<sequence>MGRQKELMNRCGEMLHIRYRLLRQALAECLGTLILVMFGCGSVAQVVLSRGTHGGFLTINLAFGFAVTLGILVAGQVSGAHLNPAVTFAMCFLAREPWIKLPIYALAQTLGAFLGAGIVFGLYYDAIWAFANNELFVSGPNGTAGIFATYPSGHLDMVNGFFDQFIGTAALIVCVLAIVDPYNNPVPRGLEAFTVGLVVLVIGTSMGFNSGYAVNPARDFGPRLFTALAGWGSEVFTTGRHWWWVPIVSPLLGSIAGVFVYQLMIGCHLEQPPPSTEEENVKLAHMKHKEQI</sequence>
<proteinExistence type="evidence at protein level"/>
<protein>
    <recommendedName>
        <fullName evidence="11">Aquaporin-3</fullName>
        <shortName>AQP-3</shortName>
    </recommendedName>
    <alternativeName>
        <fullName>Aquaglyceroporin-3</fullName>
    </alternativeName>
</protein>
<comment type="function">
    <text evidence="2 3 5 6 7 9 10">Aquaglyceroporins form homotetrameric transmembrane channels, with each monomer independently mediating glycerol and water transport across the plasma membrane along their osmotic gradient (PubMed:11880378, PubMed:12771381, PubMed:17429015, PubMed:19468303). Could also be permeable to urea (By similarity). Also participates in cell permeability to H2O2 and H2O2-mediated signaling (By similarity). In skin, transports glycerol to the epidermis and stratum corneum, where it maintains hydration, elasticity, and supports lipid biosynthesis for barrier repair (PubMed:11880378, PubMed:12771381). In kidney, contributes to the reabsorption of water, helping the body maintain proper fluid balance (PubMed:10737773).</text>
</comment>
<comment type="catalytic activity">
    <reaction evidence="3">
        <text>glycerol(in) = glycerol(out)</text>
        <dbReference type="Rhea" id="RHEA:29675"/>
        <dbReference type="ChEBI" id="CHEBI:17754"/>
    </reaction>
</comment>
<comment type="catalytic activity">
    <reaction evidence="3">
        <text>H2O(in) = H2O(out)</text>
        <dbReference type="Rhea" id="RHEA:29667"/>
        <dbReference type="ChEBI" id="CHEBI:15377"/>
    </reaction>
</comment>
<comment type="catalytic activity">
    <reaction evidence="2">
        <text>urea(in) = urea(out)</text>
        <dbReference type="Rhea" id="RHEA:32799"/>
        <dbReference type="ChEBI" id="CHEBI:16199"/>
    </reaction>
</comment>
<comment type="catalytic activity">
    <reaction evidence="3">
        <text>H2O2(out) = H2O2(in)</text>
        <dbReference type="Rhea" id="RHEA:74375"/>
        <dbReference type="ChEBI" id="CHEBI:16240"/>
    </reaction>
</comment>
<comment type="subunit">
    <text evidence="1 3">Homotetramer; each monomer provides an independent glycerol/water pore (By similarity). Could also exist in other oligomeric states (By similarity).</text>
</comment>
<comment type="subcellular location">
    <subcellularLocation>
        <location evidence="3">Cell membrane</location>
        <topology evidence="1">Multi-pass membrane protein</topology>
    </subcellularLocation>
    <subcellularLocation>
        <location evidence="8">Basolateral cell membrane</location>
        <topology evidence="1">Multi-pass membrane protein</topology>
    </subcellularLocation>
</comment>
<comment type="tissue specificity">
    <text evidence="8">Detected in principal cells in collecting ducts in kidney medulla (at protein level) (PubMed:16641094). Renal medulla and colon. Predominantly in the inner medulla. Expressed in basal layer of epidermal keratinocytes.</text>
</comment>
<comment type="domain">
    <text evidence="1">Aquaporins contain two tandem repeats each containing three membrane-spanning domains and a pore-forming loop with the signature motif Asn-Pro-Ala (NPA).</text>
</comment>
<comment type="disruption phenotype">
    <text evidence="5 6 7">AQP3 knockout mice have normal perinatal survival, growth, and serum chemistries but are polyuric because of defective urinary concentrating ability (PubMed:10737773, PubMed:11880378). Mice have dry skin with reduced SC (stratum corneum) hydration, decreased elasticity and impaired lipid biosynthesis. The glycerol content of SC and epidermis is reduced, whereas that of dermis and serum is normal (PubMed:11880378, PubMed:12771381).</text>
</comment>
<comment type="similarity">
    <text evidence="12">Belongs to the MIP/aquaporin (TC 1.A.8) family.</text>
</comment>
<comment type="sequence caution" evidence="12">
    <conflict type="erroneous initiation">
        <sequence resource="EMBL-CDS" id="BAB03270"/>
    </conflict>
    <text>Truncated N-terminus.</text>
</comment>
<dbReference type="EMBL" id="AF104416">
    <property type="protein sequence ID" value="AAD20304.1"/>
    <property type="molecule type" value="mRNA"/>
</dbReference>
<dbReference type="EMBL" id="AF104417">
    <property type="protein sequence ID" value="AAD20305.1"/>
    <property type="molecule type" value="Genomic_DNA"/>
</dbReference>
<dbReference type="EMBL" id="AK145678">
    <property type="protein sequence ID" value="BAE26584.1"/>
    <property type="molecule type" value="mRNA"/>
</dbReference>
<dbReference type="EMBL" id="AK160929">
    <property type="protein sequence ID" value="BAE36096.1"/>
    <property type="molecule type" value="mRNA"/>
</dbReference>
<dbReference type="EMBL" id="AL837521">
    <property type="status" value="NOT_ANNOTATED_CDS"/>
    <property type="molecule type" value="Genomic_DNA"/>
</dbReference>
<dbReference type="EMBL" id="CH466538">
    <property type="protein sequence ID" value="EDL05416.1"/>
    <property type="molecule type" value="Genomic_DNA"/>
</dbReference>
<dbReference type="EMBL" id="BC027400">
    <property type="protein sequence ID" value="AAH27400.1"/>
    <property type="molecule type" value="mRNA"/>
</dbReference>
<dbReference type="EMBL" id="AB019039">
    <property type="protein sequence ID" value="BAB03270.1"/>
    <property type="status" value="ALT_INIT"/>
    <property type="molecule type" value="mRNA"/>
</dbReference>
<dbReference type="CCDS" id="CCDS38714.1"/>
<dbReference type="RefSeq" id="NP_057898.2">
    <property type="nucleotide sequence ID" value="NM_016689.2"/>
</dbReference>
<dbReference type="SMR" id="Q8R2N1"/>
<dbReference type="BioGRID" id="198172">
    <property type="interactions" value="1"/>
</dbReference>
<dbReference type="FunCoup" id="Q8R2N1">
    <property type="interactions" value="62"/>
</dbReference>
<dbReference type="STRING" id="10090.ENSMUSP00000055110"/>
<dbReference type="GlyCosmos" id="Q8R2N1">
    <property type="glycosylation" value="1 site, No reported glycans"/>
</dbReference>
<dbReference type="GlyGen" id="Q8R2N1">
    <property type="glycosylation" value="1 site"/>
</dbReference>
<dbReference type="PhosphoSitePlus" id="Q8R2N1"/>
<dbReference type="PaxDb" id="10090-ENSMUSP00000055110"/>
<dbReference type="ProteomicsDB" id="273909"/>
<dbReference type="Antibodypedia" id="55184">
    <property type="antibodies" value="323 antibodies from 31 providers"/>
</dbReference>
<dbReference type="DNASU" id="11828"/>
<dbReference type="Ensembl" id="ENSMUST00000055327.8">
    <property type="protein sequence ID" value="ENSMUSP00000055110.8"/>
    <property type="gene ID" value="ENSMUSG00000028435.9"/>
</dbReference>
<dbReference type="GeneID" id="11828"/>
<dbReference type="KEGG" id="mmu:11828"/>
<dbReference type="UCSC" id="uc008sih.1">
    <property type="organism name" value="mouse"/>
</dbReference>
<dbReference type="AGR" id="MGI:1333777"/>
<dbReference type="CTD" id="360"/>
<dbReference type="MGI" id="MGI:1333777">
    <property type="gene designation" value="Aqp3"/>
</dbReference>
<dbReference type="VEuPathDB" id="HostDB:ENSMUSG00000028435"/>
<dbReference type="eggNOG" id="KOG0224">
    <property type="taxonomic scope" value="Eukaryota"/>
</dbReference>
<dbReference type="GeneTree" id="ENSGT00940000157242"/>
<dbReference type="HOGENOM" id="CLU_020019_9_1_1"/>
<dbReference type="InParanoid" id="Q8R2N1"/>
<dbReference type="OMA" id="FTSHHYY"/>
<dbReference type="OrthoDB" id="3222at2759"/>
<dbReference type="PhylomeDB" id="Q8R2N1"/>
<dbReference type="TreeFam" id="TF313173"/>
<dbReference type="Reactome" id="R-MMU-432040">
    <property type="pathway name" value="Vasopressin regulates renal water homeostasis via Aquaporins"/>
</dbReference>
<dbReference type="Reactome" id="R-MMU-432047">
    <property type="pathway name" value="Passive transport by Aquaporins"/>
</dbReference>
<dbReference type="BioGRID-ORCS" id="11828">
    <property type="hits" value="1 hit in 78 CRISPR screens"/>
</dbReference>
<dbReference type="ChiTaRS" id="Aqp3">
    <property type="organism name" value="mouse"/>
</dbReference>
<dbReference type="PRO" id="PR:Q8R2N1"/>
<dbReference type="Proteomes" id="UP000000589">
    <property type="component" value="Chromosome 4"/>
</dbReference>
<dbReference type="RNAct" id="Q8R2N1">
    <property type="molecule type" value="protein"/>
</dbReference>
<dbReference type="Bgee" id="ENSMUSG00000028435">
    <property type="expression patterns" value="Expressed in lip and 132 other cell types or tissues"/>
</dbReference>
<dbReference type="GO" id="GO:0016323">
    <property type="term" value="C:basolateral plasma membrane"/>
    <property type="evidence" value="ECO:0000314"/>
    <property type="project" value="MGI"/>
</dbReference>
<dbReference type="GO" id="GO:0005911">
    <property type="term" value="C:cell-cell junction"/>
    <property type="evidence" value="ECO:0000314"/>
    <property type="project" value="MGI"/>
</dbReference>
<dbReference type="GO" id="GO:0005737">
    <property type="term" value="C:cytoplasm"/>
    <property type="evidence" value="ECO:0007669"/>
    <property type="project" value="Ensembl"/>
</dbReference>
<dbReference type="GO" id="GO:0005654">
    <property type="term" value="C:nucleoplasm"/>
    <property type="evidence" value="ECO:0007669"/>
    <property type="project" value="Ensembl"/>
</dbReference>
<dbReference type="GO" id="GO:0005886">
    <property type="term" value="C:plasma membrane"/>
    <property type="evidence" value="ECO:0000314"/>
    <property type="project" value="MGI"/>
</dbReference>
<dbReference type="GO" id="GO:0015254">
    <property type="term" value="F:glycerol channel activity"/>
    <property type="evidence" value="ECO:0000250"/>
    <property type="project" value="UniProtKB"/>
</dbReference>
<dbReference type="GO" id="GO:0042802">
    <property type="term" value="F:identical protein binding"/>
    <property type="evidence" value="ECO:0007669"/>
    <property type="project" value="Ensembl"/>
</dbReference>
<dbReference type="GO" id="GO:0015166">
    <property type="term" value="F:polyol transmembrane transporter activity"/>
    <property type="evidence" value="ECO:0000250"/>
    <property type="project" value="UniProtKB"/>
</dbReference>
<dbReference type="GO" id="GO:0015250">
    <property type="term" value="F:water channel activity"/>
    <property type="evidence" value="ECO:0000250"/>
    <property type="project" value="UniProtKB"/>
</dbReference>
<dbReference type="GO" id="GO:0071456">
    <property type="term" value="P:cellular response to hypoxia"/>
    <property type="evidence" value="ECO:0000266"/>
    <property type="project" value="MGI"/>
</dbReference>
<dbReference type="GO" id="GO:0051649">
    <property type="term" value="P:establishment of localization in cell"/>
    <property type="evidence" value="ECO:0000315"/>
    <property type="project" value="MGI"/>
</dbReference>
<dbReference type="GO" id="GO:0015793">
    <property type="term" value="P:glycerol transmembrane transport"/>
    <property type="evidence" value="ECO:0000314"/>
    <property type="project" value="UniProtKB"/>
</dbReference>
<dbReference type="GO" id="GO:0042476">
    <property type="term" value="P:odontogenesis"/>
    <property type="evidence" value="ECO:0007669"/>
    <property type="project" value="Ensembl"/>
</dbReference>
<dbReference type="GO" id="GO:0002684">
    <property type="term" value="P:positive regulation of immune system process"/>
    <property type="evidence" value="ECO:0007669"/>
    <property type="project" value="Ensembl"/>
</dbReference>
<dbReference type="GO" id="GO:0070295">
    <property type="term" value="P:renal water absorption"/>
    <property type="evidence" value="ECO:0000315"/>
    <property type="project" value="MGI"/>
</dbReference>
<dbReference type="GO" id="GO:0002931">
    <property type="term" value="P:response to ischemia"/>
    <property type="evidence" value="ECO:0000314"/>
    <property type="project" value="MGI"/>
</dbReference>
<dbReference type="GO" id="GO:0032526">
    <property type="term" value="P:response to retinoic acid"/>
    <property type="evidence" value="ECO:0007669"/>
    <property type="project" value="Ensembl"/>
</dbReference>
<dbReference type="GO" id="GO:0015840">
    <property type="term" value="P:urea transport"/>
    <property type="evidence" value="ECO:0000315"/>
    <property type="project" value="MGI"/>
</dbReference>
<dbReference type="GO" id="GO:0006833">
    <property type="term" value="P:water transport"/>
    <property type="evidence" value="ECO:0000314"/>
    <property type="project" value="UniProtKB"/>
</dbReference>
<dbReference type="CDD" id="cd00333">
    <property type="entry name" value="MIP"/>
    <property type="match status" value="1"/>
</dbReference>
<dbReference type="FunFam" id="1.20.1080.10:FF:000005">
    <property type="entry name" value="Aquaporin 3"/>
    <property type="match status" value="1"/>
</dbReference>
<dbReference type="Gene3D" id="1.20.1080.10">
    <property type="entry name" value="Glycerol uptake facilitator protein"/>
    <property type="match status" value="1"/>
</dbReference>
<dbReference type="InterPro" id="IPR023271">
    <property type="entry name" value="Aquaporin-like"/>
</dbReference>
<dbReference type="InterPro" id="IPR023275">
    <property type="entry name" value="Aquaporin_3"/>
</dbReference>
<dbReference type="InterPro" id="IPR000425">
    <property type="entry name" value="MIP"/>
</dbReference>
<dbReference type="InterPro" id="IPR050363">
    <property type="entry name" value="MIP/Aquaporin"/>
</dbReference>
<dbReference type="InterPro" id="IPR022357">
    <property type="entry name" value="MIP_CS"/>
</dbReference>
<dbReference type="NCBIfam" id="TIGR00861">
    <property type="entry name" value="MIP"/>
    <property type="match status" value="1"/>
</dbReference>
<dbReference type="PANTHER" id="PTHR43829">
    <property type="entry name" value="AQUAPORIN OR AQUAGLYCEROPORIN RELATED"/>
    <property type="match status" value="1"/>
</dbReference>
<dbReference type="PANTHER" id="PTHR43829:SF7">
    <property type="entry name" value="AQUAPORIN-3"/>
    <property type="match status" value="1"/>
</dbReference>
<dbReference type="Pfam" id="PF00230">
    <property type="entry name" value="MIP"/>
    <property type="match status" value="1"/>
</dbReference>
<dbReference type="PRINTS" id="PR02015">
    <property type="entry name" value="AQUAPORIN3"/>
</dbReference>
<dbReference type="PRINTS" id="PR00783">
    <property type="entry name" value="MINTRINSICP"/>
</dbReference>
<dbReference type="SUPFAM" id="SSF81338">
    <property type="entry name" value="Aquaporin-like"/>
    <property type="match status" value="1"/>
</dbReference>
<dbReference type="PROSITE" id="PS00221">
    <property type="entry name" value="MIP"/>
    <property type="match status" value="1"/>
</dbReference>
<reference key="1">
    <citation type="journal article" date="2003" name="Proc. Natl. Acad. Sci. U.S.A.">
        <title>Glycerol replacement corrects defective skin hydration, elasticity, and barrier function in aquaporin-3-deficient mice.</title>
        <authorList>
            <person name="Hara M."/>
            <person name="Verkman A.S."/>
        </authorList>
    </citation>
    <scope>NUCLEOTIDE SEQUENCE [GENOMIC DNA / MRNA]</scope>
    <scope>FUNCTION</scope>
    <scope>DISRUPTION PHENOTYPE</scope>
    <source>
        <strain>C57BL/6J</strain>
    </source>
</reference>
<reference key="2">
    <citation type="journal article" date="2005" name="Science">
        <title>The transcriptional landscape of the mammalian genome.</title>
        <authorList>
            <person name="Carninci P."/>
            <person name="Kasukawa T."/>
            <person name="Katayama S."/>
            <person name="Gough J."/>
            <person name="Frith M.C."/>
            <person name="Maeda N."/>
            <person name="Oyama R."/>
            <person name="Ravasi T."/>
            <person name="Lenhard B."/>
            <person name="Wells C."/>
            <person name="Kodzius R."/>
            <person name="Shimokawa K."/>
            <person name="Bajic V.B."/>
            <person name="Brenner S.E."/>
            <person name="Batalov S."/>
            <person name="Forrest A.R."/>
            <person name="Zavolan M."/>
            <person name="Davis M.J."/>
            <person name="Wilming L.G."/>
            <person name="Aidinis V."/>
            <person name="Allen J.E."/>
            <person name="Ambesi-Impiombato A."/>
            <person name="Apweiler R."/>
            <person name="Aturaliya R.N."/>
            <person name="Bailey T.L."/>
            <person name="Bansal M."/>
            <person name="Baxter L."/>
            <person name="Beisel K.W."/>
            <person name="Bersano T."/>
            <person name="Bono H."/>
            <person name="Chalk A.M."/>
            <person name="Chiu K.P."/>
            <person name="Choudhary V."/>
            <person name="Christoffels A."/>
            <person name="Clutterbuck D.R."/>
            <person name="Crowe M.L."/>
            <person name="Dalla E."/>
            <person name="Dalrymple B.P."/>
            <person name="de Bono B."/>
            <person name="Della Gatta G."/>
            <person name="di Bernardo D."/>
            <person name="Down T."/>
            <person name="Engstrom P."/>
            <person name="Fagiolini M."/>
            <person name="Faulkner G."/>
            <person name="Fletcher C.F."/>
            <person name="Fukushima T."/>
            <person name="Furuno M."/>
            <person name="Futaki S."/>
            <person name="Gariboldi M."/>
            <person name="Georgii-Hemming P."/>
            <person name="Gingeras T.R."/>
            <person name="Gojobori T."/>
            <person name="Green R.E."/>
            <person name="Gustincich S."/>
            <person name="Harbers M."/>
            <person name="Hayashi Y."/>
            <person name="Hensch T.K."/>
            <person name="Hirokawa N."/>
            <person name="Hill D."/>
            <person name="Huminiecki L."/>
            <person name="Iacono M."/>
            <person name="Ikeo K."/>
            <person name="Iwama A."/>
            <person name="Ishikawa T."/>
            <person name="Jakt M."/>
            <person name="Kanapin A."/>
            <person name="Katoh M."/>
            <person name="Kawasawa Y."/>
            <person name="Kelso J."/>
            <person name="Kitamura H."/>
            <person name="Kitano H."/>
            <person name="Kollias G."/>
            <person name="Krishnan S.P."/>
            <person name="Kruger A."/>
            <person name="Kummerfeld S.K."/>
            <person name="Kurochkin I.V."/>
            <person name="Lareau L.F."/>
            <person name="Lazarevic D."/>
            <person name="Lipovich L."/>
            <person name="Liu J."/>
            <person name="Liuni S."/>
            <person name="McWilliam S."/>
            <person name="Madan Babu M."/>
            <person name="Madera M."/>
            <person name="Marchionni L."/>
            <person name="Matsuda H."/>
            <person name="Matsuzawa S."/>
            <person name="Miki H."/>
            <person name="Mignone F."/>
            <person name="Miyake S."/>
            <person name="Morris K."/>
            <person name="Mottagui-Tabar S."/>
            <person name="Mulder N."/>
            <person name="Nakano N."/>
            <person name="Nakauchi H."/>
            <person name="Ng P."/>
            <person name="Nilsson R."/>
            <person name="Nishiguchi S."/>
            <person name="Nishikawa S."/>
            <person name="Nori F."/>
            <person name="Ohara O."/>
            <person name="Okazaki Y."/>
            <person name="Orlando V."/>
            <person name="Pang K.C."/>
            <person name="Pavan W.J."/>
            <person name="Pavesi G."/>
            <person name="Pesole G."/>
            <person name="Petrovsky N."/>
            <person name="Piazza S."/>
            <person name="Reed J."/>
            <person name="Reid J.F."/>
            <person name="Ring B.Z."/>
            <person name="Ringwald M."/>
            <person name="Rost B."/>
            <person name="Ruan Y."/>
            <person name="Salzberg S.L."/>
            <person name="Sandelin A."/>
            <person name="Schneider C."/>
            <person name="Schoenbach C."/>
            <person name="Sekiguchi K."/>
            <person name="Semple C.A."/>
            <person name="Seno S."/>
            <person name="Sessa L."/>
            <person name="Sheng Y."/>
            <person name="Shibata Y."/>
            <person name="Shimada H."/>
            <person name="Shimada K."/>
            <person name="Silva D."/>
            <person name="Sinclair B."/>
            <person name="Sperling S."/>
            <person name="Stupka E."/>
            <person name="Sugiura K."/>
            <person name="Sultana R."/>
            <person name="Takenaka Y."/>
            <person name="Taki K."/>
            <person name="Tammoja K."/>
            <person name="Tan S.L."/>
            <person name="Tang S."/>
            <person name="Taylor M.S."/>
            <person name="Tegner J."/>
            <person name="Teichmann S.A."/>
            <person name="Ueda H.R."/>
            <person name="van Nimwegen E."/>
            <person name="Verardo R."/>
            <person name="Wei C.L."/>
            <person name="Yagi K."/>
            <person name="Yamanishi H."/>
            <person name="Zabarovsky E."/>
            <person name="Zhu S."/>
            <person name="Zimmer A."/>
            <person name="Hide W."/>
            <person name="Bult C."/>
            <person name="Grimmond S.M."/>
            <person name="Teasdale R.D."/>
            <person name="Liu E.T."/>
            <person name="Brusic V."/>
            <person name="Quackenbush J."/>
            <person name="Wahlestedt C."/>
            <person name="Mattick J.S."/>
            <person name="Hume D.A."/>
            <person name="Kai C."/>
            <person name="Sasaki D."/>
            <person name="Tomaru Y."/>
            <person name="Fukuda S."/>
            <person name="Kanamori-Katayama M."/>
            <person name="Suzuki M."/>
            <person name="Aoki J."/>
            <person name="Arakawa T."/>
            <person name="Iida J."/>
            <person name="Imamura K."/>
            <person name="Itoh M."/>
            <person name="Kato T."/>
            <person name="Kawaji H."/>
            <person name="Kawagashira N."/>
            <person name="Kawashima T."/>
            <person name="Kojima M."/>
            <person name="Kondo S."/>
            <person name="Konno H."/>
            <person name="Nakano K."/>
            <person name="Ninomiya N."/>
            <person name="Nishio T."/>
            <person name="Okada M."/>
            <person name="Plessy C."/>
            <person name="Shibata K."/>
            <person name="Shiraki T."/>
            <person name="Suzuki S."/>
            <person name="Tagami M."/>
            <person name="Waki K."/>
            <person name="Watahiki A."/>
            <person name="Okamura-Oho Y."/>
            <person name="Suzuki H."/>
            <person name="Kawai J."/>
            <person name="Hayashizaki Y."/>
        </authorList>
    </citation>
    <scope>NUCLEOTIDE SEQUENCE [LARGE SCALE MRNA]</scope>
    <source>
        <strain>C57BL/6J</strain>
        <tissue>Extraembryonic tissue</tissue>
        <tissue>Placenta</tissue>
    </source>
</reference>
<reference key="3">
    <citation type="journal article" date="2009" name="PLoS Biol.">
        <title>Lineage-specific biology revealed by a finished genome assembly of the mouse.</title>
        <authorList>
            <person name="Church D.M."/>
            <person name="Goodstadt L."/>
            <person name="Hillier L.W."/>
            <person name="Zody M.C."/>
            <person name="Goldstein S."/>
            <person name="She X."/>
            <person name="Bult C.J."/>
            <person name="Agarwala R."/>
            <person name="Cherry J.L."/>
            <person name="DiCuccio M."/>
            <person name="Hlavina W."/>
            <person name="Kapustin Y."/>
            <person name="Meric P."/>
            <person name="Maglott D."/>
            <person name="Birtle Z."/>
            <person name="Marques A.C."/>
            <person name="Graves T."/>
            <person name="Zhou S."/>
            <person name="Teague B."/>
            <person name="Potamousis K."/>
            <person name="Churas C."/>
            <person name="Place M."/>
            <person name="Herschleb J."/>
            <person name="Runnheim R."/>
            <person name="Forrest D."/>
            <person name="Amos-Landgraf J."/>
            <person name="Schwartz D.C."/>
            <person name="Cheng Z."/>
            <person name="Lindblad-Toh K."/>
            <person name="Eichler E.E."/>
            <person name="Ponting C.P."/>
        </authorList>
    </citation>
    <scope>NUCLEOTIDE SEQUENCE [LARGE SCALE GENOMIC DNA]</scope>
    <source>
        <strain>C57BL/6J</strain>
    </source>
</reference>
<reference key="4">
    <citation type="submission" date="2005-09" db="EMBL/GenBank/DDBJ databases">
        <authorList>
            <person name="Mural R.J."/>
            <person name="Adams M.D."/>
            <person name="Myers E.W."/>
            <person name="Smith H.O."/>
            <person name="Venter J.C."/>
        </authorList>
    </citation>
    <scope>NUCLEOTIDE SEQUENCE [LARGE SCALE GENOMIC DNA]</scope>
</reference>
<reference key="5">
    <citation type="journal article" date="2004" name="Genome Res.">
        <title>The status, quality, and expansion of the NIH full-length cDNA project: the Mammalian Gene Collection (MGC).</title>
        <authorList>
            <consortium name="The MGC Project Team"/>
        </authorList>
    </citation>
    <scope>NUCLEOTIDE SEQUENCE [LARGE SCALE MRNA]</scope>
</reference>
<reference key="6">
    <citation type="journal article" date="2000" name="J. Biol. Chem.">
        <title>Aquaporin adipose, a putative glycerol channel in adipocytes.</title>
        <authorList>
            <person name="Kishida K."/>
            <person name="Kuriyama H."/>
            <person name="Funahashi T."/>
            <person name="Shimomura I."/>
            <person name="Kihara S."/>
            <person name="Ouchi N."/>
            <person name="Nishida M."/>
            <person name="Nishizawa H."/>
            <person name="Masuda M."/>
            <person name="Takahashi M."/>
            <person name="Hotta K."/>
            <person name="Nakamura T."/>
            <person name="Yamashita S."/>
            <person name="Tochino Y."/>
            <person name="Matsuzawa Y."/>
        </authorList>
    </citation>
    <scope>NUCLEOTIDE SEQUENCE [MRNA] OF 4-292</scope>
    <source>
        <tissue>Kidney</tissue>
    </source>
</reference>
<reference key="7">
    <citation type="journal article" date="2000" name="Proc. Natl. Acad. Sci. U.S.A.">
        <title>Nephrogenic diabetes insipidus in mice lacking aquaporin-3 water channels.</title>
        <authorList>
            <person name="Ma T."/>
            <person name="Song Y."/>
            <person name="Yang B."/>
            <person name="Gillespie A."/>
            <person name="Carlson E.J."/>
            <person name="Epstein C.J."/>
            <person name="Verkman A.S."/>
        </authorList>
    </citation>
    <scope>FUNCTION</scope>
    <scope>DISRUPTION PHENOTYPE</scope>
</reference>
<reference key="8">
    <citation type="journal article" date="2002" name="J. Biol. Chem.">
        <title>Impaired stratum corneum hydration in mice lacking epidermal water channel aquaporin-3.</title>
        <authorList>
            <person name="Ma T."/>
            <person name="Hara M."/>
            <person name="Sougrat R."/>
            <person name="Verbavatz J.M."/>
            <person name="Verkman A.S."/>
        </authorList>
    </citation>
    <scope>FUNCTION</scope>
    <scope>DISRUPTION PHENOTYPE</scope>
</reference>
<reference key="9">
    <citation type="journal article" date="2006" name="Proc. Natl. Acad. Sci. U.S.A.">
        <title>Congenital progressive hydronephrosis (cph) is caused by an S256L mutation in aquaporin-2 that affects its phosphorylation and apical membrane accumulation.</title>
        <authorList>
            <person name="McDill B.W."/>
            <person name="Li S.Z."/>
            <person name="Kovach P.A."/>
            <person name="Ding L."/>
            <person name="Chen F."/>
        </authorList>
    </citation>
    <scope>SUBCELLULAR LOCATION</scope>
    <scope>TISSUE SPECIFICITY</scope>
</reference>
<reference key="10">
    <citation type="journal article" date="2007" name="Biol. Reprod.">
        <title>The role of aquaporin 3 in the movement of water and cryoprotectants in mouse morulae.</title>
        <authorList>
            <person name="Edashige K."/>
            <person name="Ohta S."/>
            <person name="Tanaka M."/>
            <person name="Kuwano T."/>
            <person name="Valdez D.M. Jr."/>
            <person name="Hara T."/>
            <person name="Jin B."/>
            <person name="Takahashi S."/>
            <person name="Seki S."/>
            <person name="Koshimoto C."/>
            <person name="Kasai M."/>
        </authorList>
    </citation>
    <scope>FUNCTION</scope>
</reference>
<reference key="11">
    <citation type="journal article" date="2010" name="Cell">
        <title>A tissue-specific atlas of mouse protein phosphorylation and expression.</title>
        <authorList>
            <person name="Huttlin E.L."/>
            <person name="Jedrychowski M.P."/>
            <person name="Elias J.E."/>
            <person name="Goswami T."/>
            <person name="Rad R."/>
            <person name="Beausoleil S.A."/>
            <person name="Villen J."/>
            <person name="Haas W."/>
            <person name="Sowa M.E."/>
            <person name="Gygi S.P."/>
        </authorList>
    </citation>
    <scope>IDENTIFICATION BY MASS SPECTROMETRY [LARGE SCALE ANALYSIS]</scope>
    <source>
        <tissue>Kidney</tissue>
    </source>
</reference>
<evidence type="ECO:0000250" key="1">
    <source>
        <dbReference type="UniProtKB" id="O14520"/>
    </source>
</evidence>
<evidence type="ECO:0000250" key="2">
    <source>
        <dbReference type="UniProtKB" id="P47862"/>
    </source>
</evidence>
<evidence type="ECO:0000250" key="3">
    <source>
        <dbReference type="UniProtKB" id="Q92482"/>
    </source>
</evidence>
<evidence type="ECO:0000255" key="4"/>
<evidence type="ECO:0000269" key="5">
    <source>
    </source>
</evidence>
<evidence type="ECO:0000269" key="6">
    <source>
    </source>
</evidence>
<evidence type="ECO:0000269" key="7">
    <source>
    </source>
</evidence>
<evidence type="ECO:0000269" key="8">
    <source>
    </source>
</evidence>
<evidence type="ECO:0000269" key="9">
    <source>
    </source>
</evidence>
<evidence type="ECO:0000269" key="10">
    <source>
    </source>
</evidence>
<evidence type="ECO:0000303" key="11">
    <source>
    </source>
</evidence>
<evidence type="ECO:0000305" key="12"/>
<evidence type="ECO:0000312" key="13">
    <source>
        <dbReference type="MGI" id="MGI:1333777"/>
    </source>
</evidence>
<feature type="chain" id="PRO_0000063944" description="Aquaporin-3">
    <location>
        <begin position="1"/>
        <end position="292"/>
    </location>
</feature>
<feature type="topological domain" description="Cytoplasmic" evidence="1">
    <location>
        <begin position="1"/>
        <end position="24"/>
    </location>
</feature>
<feature type="transmembrane region" description="Helical; Name=1" evidence="1">
    <location>
        <begin position="25"/>
        <end position="42"/>
    </location>
</feature>
<feature type="topological domain" description="Extracellular" evidence="1">
    <location>
        <begin position="43"/>
        <end position="56"/>
    </location>
</feature>
<feature type="transmembrane region" description="Helical; Name=2" evidence="1">
    <location>
        <begin position="57"/>
        <end position="74"/>
    </location>
</feature>
<feature type="topological domain" description="Cytoplasmic" evidence="1">
    <location>
        <begin position="75"/>
        <end position="78"/>
    </location>
</feature>
<feature type="intramembrane region" description="Discontinuously helical" evidence="1">
    <location>
        <begin position="79"/>
        <end position="92"/>
    </location>
</feature>
<feature type="topological domain" description="Cytoplasmic" evidence="1">
    <location>
        <begin position="93"/>
        <end position="100"/>
    </location>
</feature>
<feature type="transmembrane region" description="Helical; Name=3" evidence="1">
    <location>
        <begin position="101"/>
        <end position="121"/>
    </location>
</feature>
<feature type="topological domain" description="Extracellular" evidence="1">
    <location>
        <begin position="122"/>
        <end position="159"/>
    </location>
</feature>
<feature type="transmembrane region" description="Helical; Name=4" evidence="1">
    <location>
        <begin position="160"/>
        <end position="177"/>
    </location>
</feature>
<feature type="topological domain" description="Cytoplasmic" evidence="1">
    <location>
        <begin position="178"/>
        <end position="189"/>
    </location>
</feature>
<feature type="transmembrane region" description="Helical; Name=5" evidence="1">
    <location>
        <begin position="190"/>
        <end position="206"/>
    </location>
</feature>
<feature type="topological domain" description="Extracellular" evidence="1">
    <location>
        <begin position="207"/>
        <end position="210"/>
    </location>
</feature>
<feature type="intramembrane region" description="Discontinuously helical" evidence="1">
    <location>
        <begin position="211"/>
        <end position="224"/>
    </location>
</feature>
<feature type="topological domain" description="Extracellular" evidence="1">
    <location>
        <begin position="225"/>
        <end position="242"/>
    </location>
</feature>
<feature type="transmembrane region" description="Helical; Name=6" evidence="1">
    <location>
        <begin position="243"/>
        <end position="264"/>
    </location>
</feature>
<feature type="topological domain" description="Cytoplasmic" evidence="1">
    <location>
        <begin position="265"/>
        <end position="292"/>
    </location>
</feature>
<feature type="short sequence motif" description="NPA 1" evidence="1">
    <location>
        <begin position="83"/>
        <end position="85"/>
    </location>
</feature>
<feature type="short sequence motif" description="NPA 2" evidence="1">
    <location>
        <begin position="215"/>
        <end position="217"/>
    </location>
</feature>
<feature type="site" description="Selectivity filter" evidence="1">
    <location>
        <position position="63"/>
    </location>
</feature>
<feature type="site" description="Selectivity filter" evidence="1">
    <location>
        <position position="212"/>
    </location>
</feature>
<feature type="site" description="Selectivity filter" evidence="1">
    <location>
        <position position="218"/>
    </location>
</feature>
<feature type="glycosylation site" description="N-linked (GlcNAc...) asparagine" evidence="4">
    <location>
        <position position="141"/>
    </location>
</feature>
<feature type="sequence conflict" description="In Ref. 1; AAD20304/AAD20305." evidence="12" ref="1">
    <original>ALIV</original>
    <variation>PLL</variation>
    <location>
        <begin position="170"/>
        <end position="173"/>
    </location>
</feature>
<feature type="sequence conflict" description="In Ref. 6; BAB03270." evidence="12" ref="6">
    <original>V</original>
    <variation>A</variation>
    <location>
        <position position="214"/>
    </location>
</feature>
<gene>
    <name evidence="11 13" type="primary">Aqp3</name>
</gene>
<accession>Q8R2N1</accession>
<accession>Q3TU75</accession>
<accession>Q9JJN8</accession>
<accession>Q9WTJ3</accession>
<organism>
    <name type="scientific">Mus musculus</name>
    <name type="common">Mouse</name>
    <dbReference type="NCBI Taxonomy" id="10090"/>
    <lineage>
        <taxon>Eukaryota</taxon>
        <taxon>Metazoa</taxon>
        <taxon>Chordata</taxon>
        <taxon>Craniata</taxon>
        <taxon>Vertebrata</taxon>
        <taxon>Euteleostomi</taxon>
        <taxon>Mammalia</taxon>
        <taxon>Eutheria</taxon>
        <taxon>Euarchontoglires</taxon>
        <taxon>Glires</taxon>
        <taxon>Rodentia</taxon>
        <taxon>Myomorpha</taxon>
        <taxon>Muroidea</taxon>
        <taxon>Muridae</taxon>
        <taxon>Murinae</taxon>
        <taxon>Mus</taxon>
        <taxon>Mus</taxon>
    </lineage>
</organism>
<name>AQP3_MOUSE</name>
<keyword id="KW-1003">Cell membrane</keyword>
<keyword id="KW-0325">Glycoprotein</keyword>
<keyword id="KW-0472">Membrane</keyword>
<keyword id="KW-1185">Reference proteome</keyword>
<keyword id="KW-0677">Repeat</keyword>
<keyword id="KW-0812">Transmembrane</keyword>
<keyword id="KW-1133">Transmembrane helix</keyword>
<keyword id="KW-0813">Transport</keyword>